<keyword id="KW-0004">4Fe-4S</keyword>
<keyword id="KW-0408">Iron</keyword>
<keyword id="KW-0411">Iron-sulfur</keyword>
<keyword id="KW-0479">Metal-binding</keyword>
<keyword id="KW-1185">Reference proteome</keyword>
<protein>
    <recommendedName>
        <fullName evidence="1">Fe/S biogenesis protein NfuA</fullName>
    </recommendedName>
</protein>
<accession>A1SZH4</accession>
<dbReference type="EMBL" id="CP000510">
    <property type="protein sequence ID" value="ABM04889.1"/>
    <property type="molecule type" value="Genomic_DNA"/>
</dbReference>
<dbReference type="RefSeq" id="WP_011771441.1">
    <property type="nucleotide sequence ID" value="NC_008709.1"/>
</dbReference>
<dbReference type="SMR" id="A1SZH4"/>
<dbReference type="STRING" id="357804.Ping_3202"/>
<dbReference type="KEGG" id="pin:Ping_3202"/>
<dbReference type="eggNOG" id="COG0316">
    <property type="taxonomic scope" value="Bacteria"/>
</dbReference>
<dbReference type="eggNOG" id="COG0694">
    <property type="taxonomic scope" value="Bacteria"/>
</dbReference>
<dbReference type="HOGENOM" id="CLU_094569_0_0_6"/>
<dbReference type="OrthoDB" id="9785450at2"/>
<dbReference type="Proteomes" id="UP000000639">
    <property type="component" value="Chromosome"/>
</dbReference>
<dbReference type="GO" id="GO:0051539">
    <property type="term" value="F:4 iron, 4 sulfur cluster binding"/>
    <property type="evidence" value="ECO:0007669"/>
    <property type="project" value="UniProtKB-UniRule"/>
</dbReference>
<dbReference type="GO" id="GO:0005506">
    <property type="term" value="F:iron ion binding"/>
    <property type="evidence" value="ECO:0007669"/>
    <property type="project" value="InterPro"/>
</dbReference>
<dbReference type="GO" id="GO:0016226">
    <property type="term" value="P:iron-sulfur cluster assembly"/>
    <property type="evidence" value="ECO:0007669"/>
    <property type="project" value="UniProtKB-UniRule"/>
</dbReference>
<dbReference type="GO" id="GO:0051604">
    <property type="term" value="P:protein maturation"/>
    <property type="evidence" value="ECO:0007669"/>
    <property type="project" value="UniProtKB-UniRule"/>
</dbReference>
<dbReference type="Gene3D" id="3.30.300.130">
    <property type="entry name" value="Fe-S cluster assembly (FSCA)"/>
    <property type="match status" value="1"/>
</dbReference>
<dbReference type="Gene3D" id="2.60.300.12">
    <property type="entry name" value="HesB-like domain"/>
    <property type="match status" value="1"/>
</dbReference>
<dbReference type="HAMAP" id="MF_01637">
    <property type="entry name" value="Fe_S_biogen_NfuA"/>
    <property type="match status" value="1"/>
</dbReference>
<dbReference type="InterPro" id="IPR017726">
    <property type="entry name" value="Fe/S_biogenesis_protein_NfuA"/>
</dbReference>
<dbReference type="InterPro" id="IPR000361">
    <property type="entry name" value="FeS_biogenesis"/>
</dbReference>
<dbReference type="InterPro" id="IPR034904">
    <property type="entry name" value="FSCA_dom_sf"/>
</dbReference>
<dbReference type="InterPro" id="IPR035903">
    <property type="entry name" value="HesB-like_dom_sf"/>
</dbReference>
<dbReference type="InterPro" id="IPR001075">
    <property type="entry name" value="NIF_FeS_clus_asmbl_NifU_C"/>
</dbReference>
<dbReference type="NCBIfam" id="NF008392">
    <property type="entry name" value="PRK11190.1"/>
    <property type="match status" value="1"/>
</dbReference>
<dbReference type="NCBIfam" id="TIGR03341">
    <property type="entry name" value="YhgI_GntY"/>
    <property type="match status" value="1"/>
</dbReference>
<dbReference type="PANTHER" id="PTHR11178:SF51">
    <property type="entry name" value="FE_S BIOGENESIS PROTEIN NFUA"/>
    <property type="match status" value="1"/>
</dbReference>
<dbReference type="PANTHER" id="PTHR11178">
    <property type="entry name" value="IRON-SULFUR CLUSTER SCAFFOLD PROTEIN NFU-RELATED"/>
    <property type="match status" value="1"/>
</dbReference>
<dbReference type="Pfam" id="PF01521">
    <property type="entry name" value="Fe-S_biosyn"/>
    <property type="match status" value="1"/>
</dbReference>
<dbReference type="Pfam" id="PF01106">
    <property type="entry name" value="NifU"/>
    <property type="match status" value="1"/>
</dbReference>
<dbReference type="SUPFAM" id="SSF117916">
    <property type="entry name" value="Fe-S cluster assembly (FSCA) domain-like"/>
    <property type="match status" value="1"/>
</dbReference>
<dbReference type="SUPFAM" id="SSF89360">
    <property type="entry name" value="HesB-like domain"/>
    <property type="match status" value="1"/>
</dbReference>
<comment type="function">
    <text evidence="1">Involved in iron-sulfur cluster biogenesis. Binds a 4Fe-4S cluster, can transfer this cluster to apoproteins, and thereby intervenes in the maturation of Fe/S proteins. Could also act as a scaffold/chaperone for damaged Fe/S proteins.</text>
</comment>
<comment type="cofactor">
    <cofactor evidence="1">
        <name>[4Fe-4S] cluster</name>
        <dbReference type="ChEBI" id="CHEBI:49883"/>
    </cofactor>
    <text evidence="1">Binds 1 [4Fe-4S] cluster per subunit. The cluster is presumably bound at the interface of two monomers.</text>
</comment>
<comment type="subunit">
    <text evidence="1">Homodimer.</text>
</comment>
<comment type="similarity">
    <text evidence="1">Belongs to the NfuA family.</text>
</comment>
<gene>
    <name evidence="1" type="primary">nfuA</name>
    <name type="ordered locus">Ping_3202</name>
</gene>
<reference key="1">
    <citation type="journal article" date="2008" name="BMC Genomics">
        <title>Genomics of an extreme psychrophile, Psychromonas ingrahamii.</title>
        <authorList>
            <person name="Riley M."/>
            <person name="Staley J.T."/>
            <person name="Danchin A."/>
            <person name="Wang T.Z."/>
            <person name="Brettin T.S."/>
            <person name="Hauser L.J."/>
            <person name="Land M.L."/>
            <person name="Thompson L.S."/>
        </authorList>
    </citation>
    <scope>NUCLEOTIDE SEQUENCE [LARGE SCALE GENOMIC DNA]</scope>
    <source>
        <strain>DSM 17664 / CCUG 51855 / 37</strain>
    </source>
</reference>
<organism>
    <name type="scientific">Psychromonas ingrahamii (strain DSM 17664 / CCUG 51855 / 37)</name>
    <dbReference type="NCBI Taxonomy" id="357804"/>
    <lineage>
        <taxon>Bacteria</taxon>
        <taxon>Pseudomonadati</taxon>
        <taxon>Pseudomonadota</taxon>
        <taxon>Gammaproteobacteria</taxon>
        <taxon>Alteromonadales</taxon>
        <taxon>Psychromonadaceae</taxon>
        <taxon>Psychromonas</taxon>
    </lineage>
</organism>
<feature type="chain" id="PRO_0000292090" description="Fe/S biogenesis protein NfuA">
    <location>
        <begin position="1"/>
        <end position="193"/>
    </location>
</feature>
<feature type="binding site" evidence="1">
    <location>
        <position position="149"/>
    </location>
    <ligand>
        <name>[4Fe-4S] cluster</name>
        <dbReference type="ChEBI" id="CHEBI:49883"/>
    </ligand>
</feature>
<feature type="binding site" evidence="1">
    <location>
        <position position="152"/>
    </location>
    <ligand>
        <name>[4Fe-4S] cluster</name>
        <dbReference type="ChEBI" id="CHEBI:49883"/>
    </ligand>
</feature>
<name>NFUA_PSYIN</name>
<proteinExistence type="inferred from homology"/>
<sequence>MIEITPIAQAHFKKLLEPQKEGTHIRVFVINPGTAKAECGVSYCPPEAVESSDTRLTFDGFDALIDEVSVPFLEDAFVDLVEEDAGTQLTLKAPNAKMRKVKDDAPLLERVEYVIQVQINPQLASHGGFIKLIEITEDNVAIIEFGGGCNGCSQVDLTLKQGVEKELIDEFSGELNAVRDITEHESGDHSFYK</sequence>
<evidence type="ECO:0000255" key="1">
    <source>
        <dbReference type="HAMAP-Rule" id="MF_01637"/>
    </source>
</evidence>